<evidence type="ECO:0000250" key="1">
    <source>
        <dbReference type="UniProtKB" id="P04571"/>
    </source>
</evidence>
<evidence type="ECO:0000255" key="2">
    <source>
        <dbReference type="PROSITE-ProRule" id="PRU00448"/>
    </source>
</evidence>
<evidence type="ECO:0000269" key="3">
    <source ref="1"/>
</evidence>
<protein>
    <recommendedName>
        <fullName>Sarcoplasmic calcium-binding protein</fullName>
        <shortName>SCP</shortName>
    </recommendedName>
</protein>
<keyword id="KW-0007">Acetylation</keyword>
<keyword id="KW-0106">Calcium</keyword>
<keyword id="KW-0903">Direct protein sequencing</keyword>
<keyword id="KW-0479">Metal-binding</keyword>
<keyword id="KW-0514">Muscle protein</keyword>
<keyword id="KW-0677">Repeat</keyword>
<sequence length="176" mass="20088">TDYLVSKWKIWYKSLDVNHDGIISIENVEESRNKFTDLHKLVGDKSTGVKVDMQKWWDTYIFLTPGAEISETQFVENLGNSFKKDKAFLATMTACFNMIFDVIDTDKDRSIDLNEFIYAFAAFGHENESVVRTAFALLKPDDDNTVPLRTVVDAWISFVTCEDASKTDVIKSAFES</sequence>
<accession>P02637</accession>
<name>SCP_MIZYE</name>
<organism>
    <name type="scientific">Mizuhopecten yessoensis</name>
    <name type="common">Japanese scallop</name>
    <name type="synonym">Patinopecten yessoensis</name>
    <dbReference type="NCBI Taxonomy" id="6573"/>
    <lineage>
        <taxon>Eukaryota</taxon>
        <taxon>Metazoa</taxon>
        <taxon>Spiralia</taxon>
        <taxon>Lophotrochozoa</taxon>
        <taxon>Mollusca</taxon>
        <taxon>Bivalvia</taxon>
        <taxon>Autobranchia</taxon>
        <taxon>Pteriomorphia</taxon>
        <taxon>Pectinida</taxon>
        <taxon>Pectinoidea</taxon>
        <taxon>Pectinidae</taxon>
        <taxon>Mizuhopecten</taxon>
    </lineage>
</organism>
<proteinExistence type="evidence at protein level"/>
<reference key="1">
    <citation type="journal article" date="1984" name="Biochim. Biophys. Acta">
        <title>Amino-acid sequence of sarcoplasmic calcium-binding protein from scallop (Patinopecten yessoensis) adductor striated muscle.</title>
        <authorList>
            <person name="Takagi T."/>
            <person name="Kobayashi T."/>
            <person name="Konishi K."/>
        </authorList>
    </citation>
    <scope>PROTEIN SEQUENCE</scope>
    <scope>ACETYLATION AT THR-1</scope>
</reference>
<dbReference type="PIR" id="A03075">
    <property type="entry name" value="KLSWM"/>
</dbReference>
<dbReference type="SMR" id="P02637"/>
<dbReference type="OrthoDB" id="427950at2759"/>
<dbReference type="GO" id="GO:0005509">
    <property type="term" value="F:calcium ion binding"/>
    <property type="evidence" value="ECO:0007669"/>
    <property type="project" value="InterPro"/>
</dbReference>
<dbReference type="Gene3D" id="1.10.238.10">
    <property type="entry name" value="EF-hand"/>
    <property type="match status" value="1"/>
</dbReference>
<dbReference type="InterPro" id="IPR011992">
    <property type="entry name" value="EF-hand-dom_pair"/>
</dbReference>
<dbReference type="InterPro" id="IPR018247">
    <property type="entry name" value="EF_Hand_1_Ca_BS"/>
</dbReference>
<dbReference type="InterPro" id="IPR002048">
    <property type="entry name" value="EF_hand_dom"/>
</dbReference>
<dbReference type="SMART" id="SM00054">
    <property type="entry name" value="EFh"/>
    <property type="match status" value="1"/>
</dbReference>
<dbReference type="SUPFAM" id="SSF47473">
    <property type="entry name" value="EF-hand"/>
    <property type="match status" value="1"/>
</dbReference>
<dbReference type="PROSITE" id="PS00018">
    <property type="entry name" value="EF_HAND_1"/>
    <property type="match status" value="1"/>
</dbReference>
<dbReference type="PROSITE" id="PS50222">
    <property type="entry name" value="EF_HAND_2"/>
    <property type="match status" value="2"/>
</dbReference>
<feature type="chain" id="PRO_0000073629" description="Sarcoplasmic calcium-binding protein">
    <location>
        <begin position="1"/>
        <end position="176"/>
    </location>
</feature>
<feature type="domain" description="EF-hand 1" evidence="2">
    <location>
        <begin position="3"/>
        <end position="38"/>
    </location>
</feature>
<feature type="domain" description="EF-hand 2" evidence="2">
    <location>
        <begin position="55"/>
        <end position="90"/>
    </location>
</feature>
<feature type="domain" description="EF-hand 3" evidence="2">
    <location>
        <begin position="91"/>
        <end position="126"/>
    </location>
</feature>
<feature type="domain" description="EF-hand 4" evidence="2">
    <location>
        <begin position="127"/>
        <end position="160"/>
    </location>
</feature>
<feature type="binding site" evidence="1">
    <location>
        <position position="16"/>
    </location>
    <ligand>
        <name>Ca(2+)</name>
        <dbReference type="ChEBI" id="CHEBI:29108"/>
        <label>1</label>
    </ligand>
</feature>
<feature type="binding site" evidence="1">
    <location>
        <position position="18"/>
    </location>
    <ligand>
        <name>Ca(2+)</name>
        <dbReference type="ChEBI" id="CHEBI:29108"/>
        <label>1</label>
    </ligand>
</feature>
<feature type="binding site" evidence="1">
    <location>
        <position position="20"/>
    </location>
    <ligand>
        <name>Ca(2+)</name>
        <dbReference type="ChEBI" id="CHEBI:29108"/>
        <label>1</label>
    </ligand>
</feature>
<feature type="binding site" evidence="1">
    <location>
        <position position="27"/>
    </location>
    <ligand>
        <name>Ca(2+)</name>
        <dbReference type="ChEBI" id="CHEBI:29108"/>
        <label>1</label>
    </ligand>
</feature>
<feature type="binding site" evidence="2">
    <location>
        <position position="104"/>
    </location>
    <ligand>
        <name>Ca(2+)</name>
        <dbReference type="ChEBI" id="CHEBI:29108"/>
    </ligand>
</feature>
<feature type="binding site" evidence="2">
    <location>
        <position position="106"/>
    </location>
    <ligand>
        <name>Ca(2+)</name>
        <dbReference type="ChEBI" id="CHEBI:29108"/>
    </ligand>
</feature>
<feature type="binding site" evidence="2">
    <location>
        <position position="108"/>
    </location>
    <ligand>
        <name>Ca(2+)</name>
        <dbReference type="ChEBI" id="CHEBI:29108"/>
    </ligand>
</feature>
<feature type="binding site" evidence="2">
    <location>
        <position position="110"/>
    </location>
    <ligand>
        <name>Ca(2+)</name>
        <dbReference type="ChEBI" id="CHEBI:29108"/>
    </ligand>
</feature>
<feature type="binding site" evidence="2">
    <location>
        <position position="115"/>
    </location>
    <ligand>
        <name>Ca(2+)</name>
        <dbReference type="ChEBI" id="CHEBI:29108"/>
    </ligand>
</feature>
<feature type="modified residue" description="N-acetylthreonine" evidence="3">
    <location>
        <position position="1"/>
    </location>
</feature>
<comment type="function">
    <text>Like parvalbumins, SCPs seem to be more abundant in fast contracting muscles, but no functional relationship can be established from this distribution.</text>
</comment>
<comment type="miscellaneous">
    <text>The sarcoplasmic calcium-binding proteins are abundant in the muscle of arthropods, mollusks, annelids, and protochordates.</text>
</comment>
<comment type="miscellaneous">
    <text>This protein has only two functional calcium-binding sites; potential sites II and IV have lost affinity for calcium.</text>
</comment>